<gene>
    <name evidence="1" type="primary">rpmG</name>
    <name type="ordered locus">RPD_3037</name>
</gene>
<feature type="chain" id="PRO_0000356633" description="Large ribosomal subunit protein bL33">
    <location>
        <begin position="1"/>
        <end position="55"/>
    </location>
</feature>
<name>RL33_RHOPS</name>
<sequence length="55" mass="6369">MAKAVTIKIKLVSTADTGFYYVTKKNSRTMTDKMTKKKYDPVARKHVEFKEAKIK</sequence>
<organism>
    <name type="scientific">Rhodopseudomonas palustris (strain BisB5)</name>
    <dbReference type="NCBI Taxonomy" id="316057"/>
    <lineage>
        <taxon>Bacteria</taxon>
        <taxon>Pseudomonadati</taxon>
        <taxon>Pseudomonadota</taxon>
        <taxon>Alphaproteobacteria</taxon>
        <taxon>Hyphomicrobiales</taxon>
        <taxon>Nitrobacteraceae</taxon>
        <taxon>Rhodopseudomonas</taxon>
    </lineage>
</organism>
<protein>
    <recommendedName>
        <fullName evidence="1">Large ribosomal subunit protein bL33</fullName>
    </recommendedName>
    <alternativeName>
        <fullName evidence="2">50S ribosomal protein L33</fullName>
    </alternativeName>
</protein>
<reference key="1">
    <citation type="submission" date="2006-03" db="EMBL/GenBank/DDBJ databases">
        <title>Complete sequence of Rhodopseudomonas palustris BisB5.</title>
        <authorList>
            <consortium name="US DOE Joint Genome Institute"/>
            <person name="Copeland A."/>
            <person name="Lucas S."/>
            <person name="Lapidus A."/>
            <person name="Barry K."/>
            <person name="Detter J.C."/>
            <person name="Glavina del Rio T."/>
            <person name="Hammon N."/>
            <person name="Israni S."/>
            <person name="Dalin E."/>
            <person name="Tice H."/>
            <person name="Pitluck S."/>
            <person name="Chain P."/>
            <person name="Malfatti S."/>
            <person name="Shin M."/>
            <person name="Vergez L."/>
            <person name="Schmutz J."/>
            <person name="Larimer F."/>
            <person name="Land M."/>
            <person name="Hauser L."/>
            <person name="Pelletier D.A."/>
            <person name="Kyrpides N."/>
            <person name="Lykidis A."/>
            <person name="Oda Y."/>
            <person name="Harwood C.S."/>
            <person name="Richardson P."/>
        </authorList>
    </citation>
    <scope>NUCLEOTIDE SEQUENCE [LARGE SCALE GENOMIC DNA]</scope>
    <source>
        <strain>BisB5</strain>
    </source>
</reference>
<proteinExistence type="inferred from homology"/>
<keyword id="KW-0687">Ribonucleoprotein</keyword>
<keyword id="KW-0689">Ribosomal protein</keyword>
<dbReference type="EMBL" id="CP000283">
    <property type="protein sequence ID" value="ABE40263.1"/>
    <property type="molecule type" value="Genomic_DNA"/>
</dbReference>
<dbReference type="SMR" id="Q135H6"/>
<dbReference type="STRING" id="316057.RPD_3037"/>
<dbReference type="KEGG" id="rpd:RPD_3037"/>
<dbReference type="eggNOG" id="COG0267">
    <property type="taxonomic scope" value="Bacteria"/>
</dbReference>
<dbReference type="HOGENOM" id="CLU_190949_1_1_5"/>
<dbReference type="BioCyc" id="RPAL316057:RPD_RS15250-MONOMER"/>
<dbReference type="Proteomes" id="UP000001818">
    <property type="component" value="Chromosome"/>
</dbReference>
<dbReference type="GO" id="GO:0022625">
    <property type="term" value="C:cytosolic large ribosomal subunit"/>
    <property type="evidence" value="ECO:0007669"/>
    <property type="project" value="TreeGrafter"/>
</dbReference>
<dbReference type="GO" id="GO:0003735">
    <property type="term" value="F:structural constituent of ribosome"/>
    <property type="evidence" value="ECO:0007669"/>
    <property type="project" value="InterPro"/>
</dbReference>
<dbReference type="GO" id="GO:0006412">
    <property type="term" value="P:translation"/>
    <property type="evidence" value="ECO:0007669"/>
    <property type="project" value="UniProtKB-UniRule"/>
</dbReference>
<dbReference type="Gene3D" id="2.20.28.120">
    <property type="entry name" value="Ribosomal protein L33"/>
    <property type="match status" value="1"/>
</dbReference>
<dbReference type="HAMAP" id="MF_00294">
    <property type="entry name" value="Ribosomal_bL33"/>
    <property type="match status" value="1"/>
</dbReference>
<dbReference type="InterPro" id="IPR001705">
    <property type="entry name" value="Ribosomal_bL33"/>
</dbReference>
<dbReference type="InterPro" id="IPR018264">
    <property type="entry name" value="Ribosomal_bL33_CS"/>
</dbReference>
<dbReference type="InterPro" id="IPR038584">
    <property type="entry name" value="Ribosomal_bL33_sf"/>
</dbReference>
<dbReference type="InterPro" id="IPR011332">
    <property type="entry name" value="Ribosomal_zn-bd"/>
</dbReference>
<dbReference type="NCBIfam" id="NF001860">
    <property type="entry name" value="PRK00595.1"/>
    <property type="match status" value="1"/>
</dbReference>
<dbReference type="NCBIfam" id="TIGR01023">
    <property type="entry name" value="rpmG_bact"/>
    <property type="match status" value="1"/>
</dbReference>
<dbReference type="PANTHER" id="PTHR15238">
    <property type="entry name" value="54S RIBOSOMAL PROTEIN L39, MITOCHONDRIAL"/>
    <property type="match status" value="1"/>
</dbReference>
<dbReference type="PANTHER" id="PTHR15238:SF1">
    <property type="entry name" value="LARGE RIBOSOMAL SUBUNIT PROTEIN BL33M"/>
    <property type="match status" value="1"/>
</dbReference>
<dbReference type="Pfam" id="PF00471">
    <property type="entry name" value="Ribosomal_L33"/>
    <property type="match status" value="1"/>
</dbReference>
<dbReference type="SUPFAM" id="SSF57829">
    <property type="entry name" value="Zn-binding ribosomal proteins"/>
    <property type="match status" value="1"/>
</dbReference>
<dbReference type="PROSITE" id="PS00582">
    <property type="entry name" value="RIBOSOMAL_L33"/>
    <property type="match status" value="1"/>
</dbReference>
<accession>Q135H6</accession>
<comment type="similarity">
    <text evidence="1">Belongs to the bacterial ribosomal protein bL33 family.</text>
</comment>
<evidence type="ECO:0000255" key="1">
    <source>
        <dbReference type="HAMAP-Rule" id="MF_00294"/>
    </source>
</evidence>
<evidence type="ECO:0000305" key="2"/>